<protein>
    <recommendedName>
        <fullName evidence="1">Endoribonuclease YbeY</fullName>
        <ecNumber evidence="1">3.1.-.-</ecNumber>
    </recommendedName>
</protein>
<evidence type="ECO:0000255" key="1">
    <source>
        <dbReference type="HAMAP-Rule" id="MF_00009"/>
    </source>
</evidence>
<organism>
    <name type="scientific">Corynebacterium diphtheriae (strain ATCC 700971 / NCTC 13129 / Biotype gravis)</name>
    <dbReference type="NCBI Taxonomy" id="257309"/>
    <lineage>
        <taxon>Bacteria</taxon>
        <taxon>Bacillati</taxon>
        <taxon>Actinomycetota</taxon>
        <taxon>Actinomycetes</taxon>
        <taxon>Mycobacteriales</taxon>
        <taxon>Corynebacteriaceae</taxon>
        <taxon>Corynebacterium</taxon>
    </lineage>
</organism>
<dbReference type="EC" id="3.1.-.-" evidence="1"/>
<dbReference type="EMBL" id="BX248359">
    <property type="protein sequence ID" value="CAE50246.1"/>
    <property type="molecule type" value="Genomic_DNA"/>
</dbReference>
<dbReference type="RefSeq" id="WP_010935275.1">
    <property type="nucleotide sequence ID" value="NC_002935.2"/>
</dbReference>
<dbReference type="SMR" id="Q6NG17"/>
<dbReference type="STRING" id="257309.DIP1717"/>
<dbReference type="KEGG" id="cdi:DIP1717"/>
<dbReference type="HOGENOM" id="CLU_106710_3_2_11"/>
<dbReference type="Proteomes" id="UP000002198">
    <property type="component" value="Chromosome"/>
</dbReference>
<dbReference type="GO" id="GO:0005737">
    <property type="term" value="C:cytoplasm"/>
    <property type="evidence" value="ECO:0007669"/>
    <property type="project" value="UniProtKB-SubCell"/>
</dbReference>
<dbReference type="GO" id="GO:0004222">
    <property type="term" value="F:metalloendopeptidase activity"/>
    <property type="evidence" value="ECO:0007669"/>
    <property type="project" value="InterPro"/>
</dbReference>
<dbReference type="GO" id="GO:0004521">
    <property type="term" value="F:RNA endonuclease activity"/>
    <property type="evidence" value="ECO:0007669"/>
    <property type="project" value="UniProtKB-UniRule"/>
</dbReference>
<dbReference type="GO" id="GO:0008270">
    <property type="term" value="F:zinc ion binding"/>
    <property type="evidence" value="ECO:0007669"/>
    <property type="project" value="UniProtKB-UniRule"/>
</dbReference>
<dbReference type="GO" id="GO:0006364">
    <property type="term" value="P:rRNA processing"/>
    <property type="evidence" value="ECO:0007669"/>
    <property type="project" value="UniProtKB-UniRule"/>
</dbReference>
<dbReference type="Gene3D" id="3.40.390.30">
    <property type="entry name" value="Metalloproteases ('zincins'), catalytic domain"/>
    <property type="match status" value="1"/>
</dbReference>
<dbReference type="HAMAP" id="MF_00009">
    <property type="entry name" value="Endoribonucl_YbeY"/>
    <property type="match status" value="1"/>
</dbReference>
<dbReference type="InterPro" id="IPR023091">
    <property type="entry name" value="MetalPrtase_cat_dom_sf_prd"/>
</dbReference>
<dbReference type="InterPro" id="IPR002036">
    <property type="entry name" value="YbeY"/>
</dbReference>
<dbReference type="InterPro" id="IPR020549">
    <property type="entry name" value="YbeY_CS"/>
</dbReference>
<dbReference type="NCBIfam" id="TIGR00043">
    <property type="entry name" value="rRNA maturation RNase YbeY"/>
    <property type="match status" value="1"/>
</dbReference>
<dbReference type="PANTHER" id="PTHR46986">
    <property type="entry name" value="ENDORIBONUCLEASE YBEY, CHLOROPLASTIC"/>
    <property type="match status" value="1"/>
</dbReference>
<dbReference type="PANTHER" id="PTHR46986:SF1">
    <property type="entry name" value="ENDORIBONUCLEASE YBEY, CHLOROPLASTIC"/>
    <property type="match status" value="1"/>
</dbReference>
<dbReference type="Pfam" id="PF02130">
    <property type="entry name" value="YbeY"/>
    <property type="match status" value="1"/>
</dbReference>
<dbReference type="SUPFAM" id="SSF55486">
    <property type="entry name" value="Metalloproteases ('zincins'), catalytic domain"/>
    <property type="match status" value="1"/>
</dbReference>
<dbReference type="PROSITE" id="PS01306">
    <property type="entry name" value="UPF0054"/>
    <property type="match status" value="1"/>
</dbReference>
<name>YBEY_CORDI</name>
<sequence length="196" mass="21192">MSIEVVNESGFDGVNEEALIDVATFVLGEMDVHPDAEATISVVDVATMSDLHVRWMDLEGPTDVMSFPMDELTPGMGRPDAQPFGPAMLGDIILCPEFAAKQAAKAGHDMGHELALLTTHGCLHLLGYDHIEPEDEQEMFALQNELLQDWYTYCARRGVEFQPKPSNAGAFPSAADRAELDKLVPGGGIPAIGEPQ</sequence>
<comment type="function">
    <text evidence="1">Single strand-specific metallo-endoribonuclease involved in late-stage 70S ribosome quality control and in maturation of the 3' terminus of the 16S rRNA.</text>
</comment>
<comment type="cofactor">
    <cofactor evidence="1">
        <name>Zn(2+)</name>
        <dbReference type="ChEBI" id="CHEBI:29105"/>
    </cofactor>
    <text evidence="1">Binds 1 zinc ion.</text>
</comment>
<comment type="subcellular location">
    <subcellularLocation>
        <location evidence="1">Cytoplasm</location>
    </subcellularLocation>
</comment>
<comment type="similarity">
    <text evidence="1">Belongs to the endoribonuclease YbeY family.</text>
</comment>
<accession>Q6NG17</accession>
<feature type="chain" id="PRO_0000102443" description="Endoribonuclease YbeY">
    <location>
        <begin position="1"/>
        <end position="196"/>
    </location>
</feature>
<feature type="binding site" evidence="1">
    <location>
        <position position="120"/>
    </location>
    <ligand>
        <name>Zn(2+)</name>
        <dbReference type="ChEBI" id="CHEBI:29105"/>
        <note>catalytic</note>
    </ligand>
</feature>
<feature type="binding site" evidence="1">
    <location>
        <position position="124"/>
    </location>
    <ligand>
        <name>Zn(2+)</name>
        <dbReference type="ChEBI" id="CHEBI:29105"/>
        <note>catalytic</note>
    </ligand>
</feature>
<feature type="binding site" evidence="1">
    <location>
        <position position="130"/>
    </location>
    <ligand>
        <name>Zn(2+)</name>
        <dbReference type="ChEBI" id="CHEBI:29105"/>
        <note>catalytic</note>
    </ligand>
</feature>
<gene>
    <name evidence="1" type="primary">ybeY</name>
    <name type="ordered locus">DIP1717</name>
</gene>
<reference key="1">
    <citation type="journal article" date="2003" name="Nucleic Acids Res.">
        <title>The complete genome sequence and analysis of Corynebacterium diphtheriae NCTC13129.</title>
        <authorList>
            <person name="Cerdeno-Tarraga A.-M."/>
            <person name="Efstratiou A."/>
            <person name="Dover L.G."/>
            <person name="Holden M.T.G."/>
            <person name="Pallen M.J."/>
            <person name="Bentley S.D."/>
            <person name="Besra G.S."/>
            <person name="Churcher C.M."/>
            <person name="James K.D."/>
            <person name="De Zoysa A."/>
            <person name="Chillingworth T."/>
            <person name="Cronin A."/>
            <person name="Dowd L."/>
            <person name="Feltwell T."/>
            <person name="Hamlin N."/>
            <person name="Holroyd S."/>
            <person name="Jagels K."/>
            <person name="Moule S."/>
            <person name="Quail M.A."/>
            <person name="Rabbinowitsch E."/>
            <person name="Rutherford K.M."/>
            <person name="Thomson N.R."/>
            <person name="Unwin L."/>
            <person name="Whitehead S."/>
            <person name="Barrell B.G."/>
            <person name="Parkhill J."/>
        </authorList>
    </citation>
    <scope>NUCLEOTIDE SEQUENCE [LARGE SCALE GENOMIC DNA]</scope>
    <source>
        <strain>ATCC 700971 / NCTC 13129 / Biotype gravis</strain>
    </source>
</reference>
<keyword id="KW-0963">Cytoplasm</keyword>
<keyword id="KW-0255">Endonuclease</keyword>
<keyword id="KW-0378">Hydrolase</keyword>
<keyword id="KW-0479">Metal-binding</keyword>
<keyword id="KW-0540">Nuclease</keyword>
<keyword id="KW-1185">Reference proteome</keyword>
<keyword id="KW-0690">Ribosome biogenesis</keyword>
<keyword id="KW-0698">rRNA processing</keyword>
<keyword id="KW-0862">Zinc</keyword>
<proteinExistence type="inferred from homology"/>